<proteinExistence type="evidence at transcript level"/>
<keyword id="KW-0244">Early protein</keyword>
<keyword id="KW-0325">Glycoprotein</keyword>
<keyword id="KW-0945">Host-virus interaction</keyword>
<keyword id="KW-1086">Inhibition of host chemokines by virus</keyword>
<keyword id="KW-1185">Reference proteome</keyword>
<keyword id="KW-0964">Secreted</keyword>
<keyword id="KW-0732">Signal</keyword>
<keyword id="KW-0899">Viral immunoevasion</keyword>
<reference key="1">
    <citation type="journal article" date="1993" name="FEBS Lett.">
        <title>Genes of variola and vaccinia viruses necessary to overcome the host protective mechanisms.</title>
        <authorList>
            <person name="Shchelkunov S.N."/>
            <person name="Blinov V.M."/>
            <person name="Sandakhchiev L.S."/>
        </authorList>
    </citation>
    <scope>NUCLEOTIDE SEQUENCE [GENOMIC DNA]</scope>
    <source>
        <strain>India-1967 / Isolate Ind3</strain>
    </source>
</reference>
<sequence>MYSLVFVILMCIPFSFQTVYDDKSVCDSDNKEYMGIEVYVEATLDEPLRQTTCESEIHKYGASVSNGGLNISVDLLNCFLNFHTVGVYTNRDTVYAKFTSLDPWTMEPINSMTYDDLVKLTEECIVDIYLKCEVDKTKDFIKTNGNRLKPRDFKTVPPNVGSIIELQSDYCVNDVTAYVKIYDECGNIKQHSIPTLRDYFTTTNGQPRKILKKKFDNC</sequence>
<organismHost>
    <name type="scientific">Homo sapiens</name>
    <name type="common">Human</name>
    <dbReference type="NCBI Taxonomy" id="9606"/>
</organismHost>
<dbReference type="EMBL" id="X69198">
    <property type="protein sequence ID" value="CAA49093.1"/>
    <property type="molecule type" value="Genomic_DNA"/>
</dbReference>
<dbReference type="PIR" id="B36853">
    <property type="entry name" value="B36853"/>
</dbReference>
<dbReference type="RefSeq" id="NP_042196.1">
    <property type="nucleotide sequence ID" value="NC_001611.1"/>
</dbReference>
<dbReference type="SMR" id="P33854"/>
<dbReference type="GeneID" id="1486527"/>
<dbReference type="KEGG" id="vg:1486527"/>
<dbReference type="Proteomes" id="UP000002060">
    <property type="component" value="Segment"/>
</dbReference>
<dbReference type="GO" id="GO:0005576">
    <property type="term" value="C:extracellular region"/>
    <property type="evidence" value="ECO:0007669"/>
    <property type="project" value="UniProtKB-SubCell"/>
</dbReference>
<dbReference type="Gene3D" id="2.60.240.10">
    <property type="entry name" value="Major secreted virus protein"/>
    <property type="match status" value="1"/>
</dbReference>
<dbReference type="InterPro" id="IPR003184">
    <property type="entry name" value="Orthopox_35kDa"/>
</dbReference>
<dbReference type="InterPro" id="IPR036540">
    <property type="entry name" value="Pox_vCCI-like_sf"/>
</dbReference>
<dbReference type="Pfam" id="PF02250">
    <property type="entry name" value="Orthopox_35kD"/>
    <property type="match status" value="1"/>
</dbReference>
<dbReference type="SUPFAM" id="SSF49889">
    <property type="entry name" value="Soluble secreted chemokine inhibitor, VCCI"/>
    <property type="match status" value="1"/>
</dbReference>
<protein>
    <recommendedName>
        <fullName>Protein OPG170</fullName>
    </recommendedName>
</protein>
<feature type="signal peptide" evidence="2">
    <location>
        <begin position="1"/>
        <end position="16"/>
    </location>
</feature>
<feature type="chain" id="PRO_0000040604" description="Protein OPG170">
    <location>
        <begin position="17"/>
        <end position="218"/>
    </location>
</feature>
<feature type="glycosylation site" description="N-linked (GlcNAc...) asparagine; by host" evidence="2">
    <location>
        <position position="70"/>
    </location>
</feature>
<evidence type="ECO:0000250" key="1">
    <source>
        <dbReference type="UniProtKB" id="P24766"/>
    </source>
</evidence>
<evidence type="ECO:0000255" key="2"/>
<evidence type="ECO:0000305" key="3"/>
<gene>
    <name type="primary">OPG170</name>
    <name type="ORF">A41L</name>
    <name type="ORF">A46L</name>
</gene>
<name>PG170_VAR67</name>
<accession>P33854</accession>
<comment type="function">
    <text evidence="1">May interact with several cellular chemokines to interfere with chemokine-glycosaminoglycan (GAG) interactions at the cell surface to alter chemotaxis of nearby responsive cells.</text>
</comment>
<comment type="subcellular location">
    <subcellularLocation>
        <location evidence="1">Secreted</location>
    </subcellularLocation>
</comment>
<comment type="induction">
    <text>Expressed in the early phase of the viral replicative cycle.</text>
</comment>
<comment type="similarity">
    <text evidence="3">Belongs to the orthopoxvirus OPG170 family.</text>
</comment>
<organism>
    <name type="scientific">Variola virus (isolate Human/India/Ind3/1967)</name>
    <name type="common">VARV</name>
    <name type="synonym">Smallpox virus</name>
    <dbReference type="NCBI Taxonomy" id="587200"/>
    <lineage>
        <taxon>Viruses</taxon>
        <taxon>Varidnaviria</taxon>
        <taxon>Bamfordvirae</taxon>
        <taxon>Nucleocytoviricota</taxon>
        <taxon>Pokkesviricetes</taxon>
        <taxon>Chitovirales</taxon>
        <taxon>Poxviridae</taxon>
        <taxon>Chordopoxvirinae</taxon>
        <taxon>Orthopoxvirus</taxon>
        <taxon>Variola virus</taxon>
    </lineage>
</organism>